<gene>
    <name type="primary">MYB6</name>
    <name type="ordered locus">At4g09460</name>
    <name type="ORF">T15G18.120</name>
</gene>
<name>MYB6_ARATH</name>
<proteinExistence type="evidence at protein level"/>
<protein>
    <recommendedName>
        <fullName>Transcription repressor MYB6</fullName>
    </recommendedName>
    <alternativeName>
        <fullName>Myb-related protein 6</fullName>
        <shortName>AtMYB6</shortName>
    </alternativeName>
</protein>
<feature type="chain" id="PRO_0000358832" description="Transcription repressor MYB6">
    <location>
        <begin position="1"/>
        <end position="236"/>
    </location>
</feature>
<feature type="domain" description="HTH myb-type 1" evidence="1">
    <location>
        <begin position="9"/>
        <end position="61"/>
    </location>
</feature>
<feature type="domain" description="HTH myb-type 2" evidence="1">
    <location>
        <begin position="62"/>
        <end position="116"/>
    </location>
</feature>
<feature type="DNA-binding region" description="H-T-H motif" evidence="1">
    <location>
        <begin position="37"/>
        <end position="61"/>
    </location>
</feature>
<feature type="DNA-binding region" description="H-T-H motif" evidence="1">
    <location>
        <begin position="89"/>
        <end position="112"/>
    </location>
</feature>
<feature type="region of interest" description="Disordered" evidence="2">
    <location>
        <begin position="159"/>
        <end position="181"/>
    </location>
</feature>
<feature type="compositionally biased region" description="Polar residues" evidence="2">
    <location>
        <begin position="162"/>
        <end position="175"/>
    </location>
</feature>
<comment type="subunit">
    <text evidence="3">Interacts with BHLH012/MYC1 and BHLH042/TT8.</text>
</comment>
<comment type="subcellular location">
    <subcellularLocation>
        <location evidence="5">Nucleus</location>
    </subcellularLocation>
</comment>
<comment type="tissue specificity">
    <text evidence="4">Expressed in roots, stems, flower buds, and siliques.</text>
</comment>
<comment type="induction">
    <text evidence="4">By ethylene, asbscisic acid (ABA), auxin (IAA), and Pseudomonas syringae pv. phaseolica.</text>
</comment>
<organism>
    <name type="scientific">Arabidopsis thaliana</name>
    <name type="common">Mouse-ear cress</name>
    <dbReference type="NCBI Taxonomy" id="3702"/>
    <lineage>
        <taxon>Eukaryota</taxon>
        <taxon>Viridiplantae</taxon>
        <taxon>Streptophyta</taxon>
        <taxon>Embryophyta</taxon>
        <taxon>Tracheophyta</taxon>
        <taxon>Spermatophyta</taxon>
        <taxon>Magnoliopsida</taxon>
        <taxon>eudicotyledons</taxon>
        <taxon>Gunneridae</taxon>
        <taxon>Pentapetalae</taxon>
        <taxon>rosids</taxon>
        <taxon>malvids</taxon>
        <taxon>Brassicales</taxon>
        <taxon>Brassicaceae</taxon>
        <taxon>Camelineae</taxon>
        <taxon>Arabidopsis</taxon>
    </lineage>
</organism>
<evidence type="ECO:0000255" key="1">
    <source>
        <dbReference type="PROSITE-ProRule" id="PRU00625"/>
    </source>
</evidence>
<evidence type="ECO:0000256" key="2">
    <source>
        <dbReference type="SAM" id="MobiDB-lite"/>
    </source>
</evidence>
<evidence type="ECO:0000269" key="3">
    <source>
    </source>
</evidence>
<evidence type="ECO:0000269" key="4">
    <source>
    </source>
</evidence>
<evidence type="ECO:0000305" key="5"/>
<sequence length="236" mass="26474">MGRSPCCEKAHTNKGAWTKEEDQRLVDYIRNHGEGCWRSLPKSAGLLRCGKSCRLRWINYLRPDLKRGNFTDDEDQIIIKLHSLLGNKWSLIAGRLPGRTDNEIKNYWNTHIKRKLLSHGIDPQTHRQINESKTVSSQVVVPIQNDAVEYSFSNLAVKPKTENSSDNGASTSGTTTDEDLRQNGECYYSDNSGHIKLNLDLTLGFGSWSGRIVGVGSSADSKPWCDPVMEARLSLL</sequence>
<keyword id="KW-0238">DNA-binding</keyword>
<keyword id="KW-0539">Nucleus</keyword>
<keyword id="KW-1185">Reference proteome</keyword>
<keyword id="KW-0677">Repeat</keyword>
<keyword id="KW-0678">Repressor</keyword>
<keyword id="KW-0804">Transcription</keyword>
<keyword id="KW-0805">Transcription regulation</keyword>
<dbReference type="EMBL" id="U26936">
    <property type="protein sequence ID" value="AAA98761.1"/>
    <property type="molecule type" value="mRNA"/>
</dbReference>
<dbReference type="EMBL" id="AY519604">
    <property type="protein sequence ID" value="AAS10074.1"/>
    <property type="molecule type" value="mRNA"/>
</dbReference>
<dbReference type="EMBL" id="AL161515">
    <property type="protein sequence ID" value="CAB78069.1"/>
    <property type="molecule type" value="Genomic_DNA"/>
</dbReference>
<dbReference type="EMBL" id="CP002687">
    <property type="protein sequence ID" value="AEE82750.1"/>
    <property type="molecule type" value="Genomic_DNA"/>
</dbReference>
<dbReference type="EMBL" id="BT004171">
    <property type="protein sequence ID" value="AAO42191.1"/>
    <property type="molecule type" value="mRNA"/>
</dbReference>
<dbReference type="EMBL" id="BT005085">
    <property type="protein sequence ID" value="AAO50618.1"/>
    <property type="molecule type" value="mRNA"/>
</dbReference>
<dbReference type="EMBL" id="AY086813">
    <property type="protein sequence ID" value="AAM63862.1"/>
    <property type="molecule type" value="mRNA"/>
</dbReference>
<dbReference type="EMBL" id="Z95782">
    <property type="protein sequence ID" value="CAB09214.1"/>
    <property type="molecule type" value="mRNA"/>
</dbReference>
<dbReference type="PIR" id="D85096">
    <property type="entry name" value="D85096"/>
</dbReference>
<dbReference type="RefSeq" id="NP_192684.1">
    <property type="nucleotide sequence ID" value="NM_117014.3"/>
</dbReference>
<dbReference type="SMR" id="Q38851"/>
<dbReference type="BioGRID" id="11829">
    <property type="interactions" value="13"/>
</dbReference>
<dbReference type="IntAct" id="Q38851">
    <property type="interactions" value="9"/>
</dbReference>
<dbReference type="STRING" id="3702.Q38851"/>
<dbReference type="PaxDb" id="3702-AT4G09460.1"/>
<dbReference type="EnsemblPlants" id="AT4G09460.1">
    <property type="protein sequence ID" value="AT4G09460.1"/>
    <property type="gene ID" value="AT4G09460"/>
</dbReference>
<dbReference type="GeneID" id="826530"/>
<dbReference type="Gramene" id="AT4G09460.1">
    <property type="protein sequence ID" value="AT4G09460.1"/>
    <property type="gene ID" value="AT4G09460"/>
</dbReference>
<dbReference type="KEGG" id="ath:AT4G09460"/>
<dbReference type="Araport" id="AT4G09460"/>
<dbReference type="TAIR" id="AT4G09460">
    <property type="gene designation" value="MYB6"/>
</dbReference>
<dbReference type="eggNOG" id="KOG0048">
    <property type="taxonomic scope" value="Eukaryota"/>
</dbReference>
<dbReference type="HOGENOM" id="CLU_028567_23_0_1"/>
<dbReference type="InParanoid" id="Q38851"/>
<dbReference type="OMA" id="ADSKPWR"/>
<dbReference type="OrthoDB" id="2143914at2759"/>
<dbReference type="PhylomeDB" id="Q38851"/>
<dbReference type="PRO" id="PR:Q38851"/>
<dbReference type="Proteomes" id="UP000006548">
    <property type="component" value="Chromosome 4"/>
</dbReference>
<dbReference type="ExpressionAtlas" id="Q38851">
    <property type="expression patterns" value="baseline and differential"/>
</dbReference>
<dbReference type="GO" id="GO:0005634">
    <property type="term" value="C:nucleus"/>
    <property type="evidence" value="ECO:0007669"/>
    <property type="project" value="UniProtKB-SubCell"/>
</dbReference>
<dbReference type="GO" id="GO:0003700">
    <property type="term" value="F:DNA-binding transcription factor activity"/>
    <property type="evidence" value="ECO:0000250"/>
    <property type="project" value="TAIR"/>
</dbReference>
<dbReference type="GO" id="GO:0000976">
    <property type="term" value="F:transcription cis-regulatory region binding"/>
    <property type="evidence" value="ECO:0000353"/>
    <property type="project" value="TAIR"/>
</dbReference>
<dbReference type="CDD" id="cd00167">
    <property type="entry name" value="SANT"/>
    <property type="match status" value="2"/>
</dbReference>
<dbReference type="FunFam" id="1.10.10.60:FF:000157">
    <property type="entry name" value="Myb transcription factor"/>
    <property type="match status" value="1"/>
</dbReference>
<dbReference type="FunFam" id="1.10.10.60:FF:000001">
    <property type="entry name" value="MYB-related transcription factor"/>
    <property type="match status" value="1"/>
</dbReference>
<dbReference type="Gene3D" id="1.10.10.60">
    <property type="entry name" value="Homeodomain-like"/>
    <property type="match status" value="2"/>
</dbReference>
<dbReference type="InterPro" id="IPR009057">
    <property type="entry name" value="Homeodomain-like_sf"/>
</dbReference>
<dbReference type="InterPro" id="IPR017930">
    <property type="entry name" value="Myb_dom"/>
</dbReference>
<dbReference type="InterPro" id="IPR015495">
    <property type="entry name" value="Myb_TF_plants"/>
</dbReference>
<dbReference type="InterPro" id="IPR001005">
    <property type="entry name" value="SANT/Myb"/>
</dbReference>
<dbReference type="PANTHER" id="PTHR47999:SF127">
    <property type="entry name" value="TRANSCRIPTION FACTOR MYB8-RELATED"/>
    <property type="match status" value="1"/>
</dbReference>
<dbReference type="PANTHER" id="PTHR47999">
    <property type="entry name" value="TRANSCRIPTION FACTOR MYB8-RELATED-RELATED"/>
    <property type="match status" value="1"/>
</dbReference>
<dbReference type="Pfam" id="PF00249">
    <property type="entry name" value="Myb_DNA-binding"/>
    <property type="match status" value="2"/>
</dbReference>
<dbReference type="SMART" id="SM00717">
    <property type="entry name" value="SANT"/>
    <property type="match status" value="2"/>
</dbReference>
<dbReference type="SUPFAM" id="SSF46689">
    <property type="entry name" value="Homeodomain-like"/>
    <property type="match status" value="1"/>
</dbReference>
<dbReference type="PROSITE" id="PS51294">
    <property type="entry name" value="HTH_MYB"/>
    <property type="match status" value="2"/>
</dbReference>
<accession>Q38851</accession>
<accession>Q9SAM3</accession>
<reference key="1">
    <citation type="journal article" date="1995" name="Plant J.">
        <title>Isolation of two novel myb-like genes from Arabidopsis and studies on the DNA-binding properties of their products.</title>
        <authorList>
            <person name="Li S.F."/>
            <person name="Parish R.W."/>
        </authorList>
    </citation>
    <scope>NUCLEOTIDE SEQUENCE [MRNA]</scope>
    <source>
        <strain>cv. Landsberg erecta</strain>
    </source>
</reference>
<reference key="2">
    <citation type="submission" date="2004-01" db="EMBL/GenBank/DDBJ databases">
        <title>The MYB transcription factor family in Arabidopsis: a genome-wide cloning and expression pattern analysis.</title>
        <authorList>
            <person name="Qu L.-J."/>
            <person name="Gu H."/>
        </authorList>
    </citation>
    <scope>NUCLEOTIDE SEQUENCE [MRNA]</scope>
</reference>
<reference key="3">
    <citation type="journal article" date="1999" name="Nature">
        <title>Sequence and analysis of chromosome 4 of the plant Arabidopsis thaliana.</title>
        <authorList>
            <person name="Mayer K.F.X."/>
            <person name="Schueller C."/>
            <person name="Wambutt R."/>
            <person name="Murphy G."/>
            <person name="Volckaert G."/>
            <person name="Pohl T."/>
            <person name="Duesterhoeft A."/>
            <person name="Stiekema W."/>
            <person name="Entian K.-D."/>
            <person name="Terryn N."/>
            <person name="Harris B."/>
            <person name="Ansorge W."/>
            <person name="Brandt P."/>
            <person name="Grivell L.A."/>
            <person name="Rieger M."/>
            <person name="Weichselgartner M."/>
            <person name="de Simone V."/>
            <person name="Obermaier B."/>
            <person name="Mache R."/>
            <person name="Mueller M."/>
            <person name="Kreis M."/>
            <person name="Delseny M."/>
            <person name="Puigdomenech P."/>
            <person name="Watson M."/>
            <person name="Schmidtheini T."/>
            <person name="Reichert B."/>
            <person name="Portetelle D."/>
            <person name="Perez-Alonso M."/>
            <person name="Boutry M."/>
            <person name="Bancroft I."/>
            <person name="Vos P."/>
            <person name="Hoheisel J."/>
            <person name="Zimmermann W."/>
            <person name="Wedler H."/>
            <person name="Ridley P."/>
            <person name="Langham S.-A."/>
            <person name="McCullagh B."/>
            <person name="Bilham L."/>
            <person name="Robben J."/>
            <person name="van der Schueren J."/>
            <person name="Grymonprez B."/>
            <person name="Chuang Y.-J."/>
            <person name="Vandenbussche F."/>
            <person name="Braeken M."/>
            <person name="Weltjens I."/>
            <person name="Voet M."/>
            <person name="Bastiaens I."/>
            <person name="Aert R."/>
            <person name="Defoor E."/>
            <person name="Weitzenegger T."/>
            <person name="Bothe G."/>
            <person name="Ramsperger U."/>
            <person name="Hilbert H."/>
            <person name="Braun M."/>
            <person name="Holzer E."/>
            <person name="Brandt A."/>
            <person name="Peters S."/>
            <person name="van Staveren M."/>
            <person name="Dirkse W."/>
            <person name="Mooijman P."/>
            <person name="Klein Lankhorst R."/>
            <person name="Rose M."/>
            <person name="Hauf J."/>
            <person name="Koetter P."/>
            <person name="Berneiser S."/>
            <person name="Hempel S."/>
            <person name="Feldpausch M."/>
            <person name="Lamberth S."/>
            <person name="Van den Daele H."/>
            <person name="De Keyser A."/>
            <person name="Buysshaert C."/>
            <person name="Gielen J."/>
            <person name="Villarroel R."/>
            <person name="De Clercq R."/>
            <person name="van Montagu M."/>
            <person name="Rogers J."/>
            <person name="Cronin A."/>
            <person name="Quail M.A."/>
            <person name="Bray-Allen S."/>
            <person name="Clark L."/>
            <person name="Doggett J."/>
            <person name="Hall S."/>
            <person name="Kay M."/>
            <person name="Lennard N."/>
            <person name="McLay K."/>
            <person name="Mayes R."/>
            <person name="Pettett A."/>
            <person name="Rajandream M.A."/>
            <person name="Lyne M."/>
            <person name="Benes V."/>
            <person name="Rechmann S."/>
            <person name="Borkova D."/>
            <person name="Bloecker H."/>
            <person name="Scharfe M."/>
            <person name="Grimm M."/>
            <person name="Loehnert T.-H."/>
            <person name="Dose S."/>
            <person name="de Haan M."/>
            <person name="Maarse A.C."/>
            <person name="Schaefer M."/>
            <person name="Mueller-Auer S."/>
            <person name="Gabel C."/>
            <person name="Fuchs M."/>
            <person name="Fartmann B."/>
            <person name="Granderath K."/>
            <person name="Dauner D."/>
            <person name="Herzl A."/>
            <person name="Neumann S."/>
            <person name="Argiriou A."/>
            <person name="Vitale D."/>
            <person name="Liguori R."/>
            <person name="Piravandi E."/>
            <person name="Massenet O."/>
            <person name="Quigley F."/>
            <person name="Clabauld G."/>
            <person name="Muendlein A."/>
            <person name="Felber R."/>
            <person name="Schnabl S."/>
            <person name="Hiller R."/>
            <person name="Schmidt W."/>
            <person name="Lecharny A."/>
            <person name="Aubourg S."/>
            <person name="Chefdor F."/>
            <person name="Cooke R."/>
            <person name="Berger C."/>
            <person name="Monfort A."/>
            <person name="Casacuberta E."/>
            <person name="Gibbons T."/>
            <person name="Weber N."/>
            <person name="Vandenbol M."/>
            <person name="Bargues M."/>
            <person name="Terol J."/>
            <person name="Torres A."/>
            <person name="Perez-Perez A."/>
            <person name="Purnelle B."/>
            <person name="Bent E."/>
            <person name="Johnson S."/>
            <person name="Tacon D."/>
            <person name="Jesse T."/>
            <person name="Heijnen L."/>
            <person name="Schwarz S."/>
            <person name="Scholler P."/>
            <person name="Heber S."/>
            <person name="Francs P."/>
            <person name="Bielke C."/>
            <person name="Frishman D."/>
            <person name="Haase D."/>
            <person name="Lemcke K."/>
            <person name="Mewes H.-W."/>
            <person name="Stocker S."/>
            <person name="Zaccaria P."/>
            <person name="Bevan M."/>
            <person name="Wilson R.K."/>
            <person name="de la Bastide M."/>
            <person name="Habermann K."/>
            <person name="Parnell L."/>
            <person name="Dedhia N."/>
            <person name="Gnoj L."/>
            <person name="Schutz K."/>
            <person name="Huang E."/>
            <person name="Spiegel L."/>
            <person name="Sekhon M."/>
            <person name="Murray J."/>
            <person name="Sheet P."/>
            <person name="Cordes M."/>
            <person name="Abu-Threideh J."/>
            <person name="Stoneking T."/>
            <person name="Kalicki J."/>
            <person name="Graves T."/>
            <person name="Harmon G."/>
            <person name="Edwards J."/>
            <person name="Latreille P."/>
            <person name="Courtney L."/>
            <person name="Cloud J."/>
            <person name="Abbott A."/>
            <person name="Scott K."/>
            <person name="Johnson D."/>
            <person name="Minx P."/>
            <person name="Bentley D."/>
            <person name="Fulton B."/>
            <person name="Miller N."/>
            <person name="Greco T."/>
            <person name="Kemp K."/>
            <person name="Kramer J."/>
            <person name="Fulton L."/>
            <person name="Mardis E."/>
            <person name="Dante M."/>
            <person name="Pepin K."/>
            <person name="Hillier L.W."/>
            <person name="Nelson J."/>
            <person name="Spieth J."/>
            <person name="Ryan E."/>
            <person name="Andrews S."/>
            <person name="Geisel C."/>
            <person name="Layman D."/>
            <person name="Du H."/>
            <person name="Ali J."/>
            <person name="Berghoff A."/>
            <person name="Jones K."/>
            <person name="Drone K."/>
            <person name="Cotton M."/>
            <person name="Joshu C."/>
            <person name="Antonoiu B."/>
            <person name="Zidanic M."/>
            <person name="Strong C."/>
            <person name="Sun H."/>
            <person name="Lamar B."/>
            <person name="Yordan C."/>
            <person name="Ma P."/>
            <person name="Zhong J."/>
            <person name="Preston R."/>
            <person name="Vil D."/>
            <person name="Shekher M."/>
            <person name="Matero A."/>
            <person name="Shah R."/>
            <person name="Swaby I.K."/>
            <person name="O'Shaughnessy A."/>
            <person name="Rodriguez M."/>
            <person name="Hoffman J."/>
            <person name="Till S."/>
            <person name="Granat S."/>
            <person name="Shohdy N."/>
            <person name="Hasegawa A."/>
            <person name="Hameed A."/>
            <person name="Lodhi M."/>
            <person name="Johnson A."/>
            <person name="Chen E."/>
            <person name="Marra M.A."/>
            <person name="Martienssen R."/>
            <person name="McCombie W.R."/>
        </authorList>
    </citation>
    <scope>NUCLEOTIDE SEQUENCE [LARGE SCALE GENOMIC DNA]</scope>
    <source>
        <strain>cv. Columbia</strain>
    </source>
</reference>
<reference key="4">
    <citation type="journal article" date="2017" name="Plant J.">
        <title>Araport11: a complete reannotation of the Arabidopsis thaliana reference genome.</title>
        <authorList>
            <person name="Cheng C.Y."/>
            <person name="Krishnakumar V."/>
            <person name="Chan A.P."/>
            <person name="Thibaud-Nissen F."/>
            <person name="Schobel S."/>
            <person name="Town C.D."/>
        </authorList>
    </citation>
    <scope>GENOME REANNOTATION</scope>
    <source>
        <strain>cv. Columbia</strain>
    </source>
</reference>
<reference key="5">
    <citation type="journal article" date="2003" name="Science">
        <title>Empirical analysis of transcriptional activity in the Arabidopsis genome.</title>
        <authorList>
            <person name="Yamada K."/>
            <person name="Lim J."/>
            <person name="Dale J.M."/>
            <person name="Chen H."/>
            <person name="Shinn P."/>
            <person name="Palm C.J."/>
            <person name="Southwick A.M."/>
            <person name="Wu H.C."/>
            <person name="Kim C.J."/>
            <person name="Nguyen M."/>
            <person name="Pham P.K."/>
            <person name="Cheuk R.F."/>
            <person name="Karlin-Newmann G."/>
            <person name="Liu S.X."/>
            <person name="Lam B."/>
            <person name="Sakano H."/>
            <person name="Wu T."/>
            <person name="Yu G."/>
            <person name="Miranda M."/>
            <person name="Quach H.L."/>
            <person name="Tripp M."/>
            <person name="Chang C.H."/>
            <person name="Lee J.M."/>
            <person name="Toriumi M.J."/>
            <person name="Chan M.M."/>
            <person name="Tang C.C."/>
            <person name="Onodera C.S."/>
            <person name="Deng J.M."/>
            <person name="Akiyama K."/>
            <person name="Ansari Y."/>
            <person name="Arakawa T."/>
            <person name="Banh J."/>
            <person name="Banno F."/>
            <person name="Bowser L."/>
            <person name="Brooks S.Y."/>
            <person name="Carninci P."/>
            <person name="Chao Q."/>
            <person name="Choy N."/>
            <person name="Enju A."/>
            <person name="Goldsmith A.D."/>
            <person name="Gurjal M."/>
            <person name="Hansen N.F."/>
            <person name="Hayashizaki Y."/>
            <person name="Johnson-Hopson C."/>
            <person name="Hsuan V.W."/>
            <person name="Iida K."/>
            <person name="Karnes M."/>
            <person name="Khan S."/>
            <person name="Koesema E."/>
            <person name="Ishida J."/>
            <person name="Jiang P.X."/>
            <person name="Jones T."/>
            <person name="Kawai J."/>
            <person name="Kamiya A."/>
            <person name="Meyers C."/>
            <person name="Nakajima M."/>
            <person name="Narusaka M."/>
            <person name="Seki M."/>
            <person name="Sakurai T."/>
            <person name="Satou M."/>
            <person name="Tamse R."/>
            <person name="Vaysberg M."/>
            <person name="Wallender E.K."/>
            <person name="Wong C."/>
            <person name="Yamamura Y."/>
            <person name="Yuan S."/>
            <person name="Shinozaki K."/>
            <person name="Davis R.W."/>
            <person name="Theologis A."/>
            <person name="Ecker J.R."/>
        </authorList>
    </citation>
    <scope>NUCLEOTIDE SEQUENCE [LARGE SCALE MRNA]</scope>
    <source>
        <strain>cv. Columbia</strain>
    </source>
</reference>
<reference key="6">
    <citation type="submission" date="2002-03" db="EMBL/GenBank/DDBJ databases">
        <title>Full-length cDNA from Arabidopsis thaliana.</title>
        <authorList>
            <person name="Brover V.V."/>
            <person name="Troukhan M.E."/>
            <person name="Alexandrov N.A."/>
            <person name="Lu Y.-P."/>
            <person name="Flavell R.B."/>
            <person name="Feldmann K.A."/>
        </authorList>
    </citation>
    <scope>NUCLEOTIDE SEQUENCE [LARGE SCALE MRNA]</scope>
</reference>
<reference key="7">
    <citation type="submission" date="1997-05" db="EMBL/GenBank/DDBJ databases">
        <title>One hundred R2R3-MYB genes in the genome of Arabidopsis thaliana.</title>
        <authorList>
            <person name="Romero I."/>
            <person name="Fuertes A."/>
            <person name="Benito M.J."/>
            <person name="Malpica J."/>
            <person name="Leyva A."/>
            <person name="Paz-Ares J."/>
        </authorList>
    </citation>
    <scope>NUCLEOTIDE SEQUENCE [MRNA] OF 55-99</scope>
    <source>
        <strain>cv. Landsberg erecta</strain>
    </source>
</reference>
<reference key="8">
    <citation type="journal article" date="1998" name="Plant J.">
        <title>Towards functional characterisation of the members of the R2R3-MYB gene family from Arabidopsis thaliana.</title>
        <authorList>
            <person name="Kranz H.D."/>
            <person name="Denekamp M."/>
            <person name="Greco R."/>
            <person name="Jin H.-L."/>
            <person name="Leyva A."/>
            <person name="Meissner R.C."/>
            <person name="Petroni K."/>
            <person name="Urzainqui A."/>
            <person name="Bevan M."/>
            <person name="Martin C."/>
            <person name="Smeekens S."/>
            <person name="Tonelli C."/>
            <person name="Paz-Ares J."/>
            <person name="Weisshaar B."/>
        </authorList>
    </citation>
    <scope>TISSUE SPECIFICITY</scope>
    <scope>INDUCTION</scope>
    <scope>NOMENCLATURE</scope>
    <source>
        <strain>cv. Columbia</strain>
    </source>
</reference>
<reference key="9">
    <citation type="journal article" date="2006" name="Plant Mol. Biol.">
        <title>The MYB transcription factor superfamily of Arabidopsis: expression analysis and phylogenetic comparison with the rice MYB family.</title>
        <authorList>
            <person name="Chen Y."/>
            <person name="Yang X."/>
            <person name="He K."/>
            <person name="Liu M."/>
            <person name="Li J."/>
            <person name="Gao Z."/>
            <person name="Lin Z."/>
            <person name="Zhang Y."/>
            <person name="Wang X."/>
            <person name="Qiu X."/>
            <person name="Shen Y."/>
            <person name="Zhang L."/>
            <person name="Deng X."/>
            <person name="Luo J."/>
            <person name="Deng X.-W."/>
            <person name="Chen Z."/>
            <person name="Gu H."/>
            <person name="Qu L.-J."/>
        </authorList>
    </citation>
    <scope>GENE FAMILY</scope>
</reference>
<reference key="10">
    <citation type="journal article" date="2004" name="Plant J.">
        <title>Comprehensive identification of Arabidopsis thaliana MYB transcription factors interacting with R/B-like BHLH proteins.</title>
        <authorList>
            <person name="Zimmermann I.M."/>
            <person name="Heim M.A."/>
            <person name="Weisshaar B."/>
            <person name="Uhrig J.F."/>
        </authorList>
    </citation>
    <scope>FUNCTION</scope>
    <scope>INTERACTION WITH BHLH012 AND BHLH042</scope>
</reference>